<reference key="1">
    <citation type="journal article" date="2002" name="Proc. Natl. Acad. Sci. U.S.A.">
        <title>The genome sequence of the facultative intracellular pathogen Brucella melitensis.</title>
        <authorList>
            <person name="DelVecchio V.G."/>
            <person name="Kapatral V."/>
            <person name="Redkar R.J."/>
            <person name="Patra G."/>
            <person name="Mujer C."/>
            <person name="Los T."/>
            <person name="Ivanova N."/>
            <person name="Anderson I."/>
            <person name="Bhattacharyya A."/>
            <person name="Lykidis A."/>
            <person name="Reznik G."/>
            <person name="Jablonski L."/>
            <person name="Larsen N."/>
            <person name="D'Souza M."/>
            <person name="Bernal A."/>
            <person name="Mazur M."/>
            <person name="Goltsman E."/>
            <person name="Selkov E."/>
            <person name="Elzer P.H."/>
            <person name="Hagius S."/>
            <person name="O'Callaghan D."/>
            <person name="Letesson J.-J."/>
            <person name="Haselkorn R."/>
            <person name="Kyrpides N.C."/>
            <person name="Overbeek R."/>
        </authorList>
    </citation>
    <scope>NUCLEOTIDE SEQUENCE [LARGE SCALE GENOMIC DNA]</scope>
    <source>
        <strain>ATCC 23456 / CCUG 17765 / NCTC 10094 / 16M</strain>
    </source>
</reference>
<gene>
    <name evidence="1" type="primary">rpmF</name>
    <name type="ordered locus">BMEI0272</name>
</gene>
<name>RL32_BRUME</name>
<proteinExistence type="inferred from homology"/>
<protein>
    <recommendedName>
        <fullName evidence="1">Large ribosomal subunit protein bL32</fullName>
    </recommendedName>
    <alternativeName>
        <fullName evidence="3">50S ribosomal protein L32</fullName>
    </alternativeName>
</protein>
<organism>
    <name type="scientific">Brucella melitensis biotype 1 (strain ATCC 23456 / CCUG 17765 / NCTC 10094 / 16M)</name>
    <dbReference type="NCBI Taxonomy" id="224914"/>
    <lineage>
        <taxon>Bacteria</taxon>
        <taxon>Pseudomonadati</taxon>
        <taxon>Pseudomonadota</taxon>
        <taxon>Alphaproteobacteria</taxon>
        <taxon>Hyphomicrobiales</taxon>
        <taxon>Brucellaceae</taxon>
        <taxon>Brucella/Ochrobactrum group</taxon>
        <taxon>Brucella</taxon>
    </lineage>
</organism>
<feature type="chain" id="PRO_0000172317" description="Large ribosomal subunit protein bL32">
    <location>
        <begin position="1"/>
        <end position="59"/>
    </location>
</feature>
<feature type="region of interest" description="Disordered" evidence="2">
    <location>
        <begin position="1"/>
        <end position="59"/>
    </location>
</feature>
<feature type="compositionally biased region" description="Basic residues" evidence="2">
    <location>
        <begin position="1"/>
        <end position="16"/>
    </location>
</feature>
<feature type="compositionally biased region" description="Basic and acidic residues" evidence="2">
    <location>
        <begin position="28"/>
        <end position="44"/>
    </location>
</feature>
<sequence length="59" mass="6790">MAVPKRKTSPSRRGMRRSADALKAPTYVEDKNSGELRRPHHIDLKSGMYRGRQVLEPKE</sequence>
<dbReference type="EMBL" id="AE008917">
    <property type="protein sequence ID" value="AAL51454.1"/>
    <property type="molecule type" value="Genomic_DNA"/>
</dbReference>
<dbReference type="PIR" id="AC3286">
    <property type="entry name" value="AC3286"/>
</dbReference>
<dbReference type="RefSeq" id="WP_002964856.1">
    <property type="nucleotide sequence ID" value="NZ_GG703781.1"/>
</dbReference>
<dbReference type="SMR" id="P66205"/>
<dbReference type="GeneID" id="97533091"/>
<dbReference type="KEGG" id="bme:BMEI0272"/>
<dbReference type="KEGG" id="bmel:DK63_1160"/>
<dbReference type="PATRIC" id="fig|224914.52.peg.1227"/>
<dbReference type="eggNOG" id="COG0333">
    <property type="taxonomic scope" value="Bacteria"/>
</dbReference>
<dbReference type="Proteomes" id="UP000000419">
    <property type="component" value="Chromosome I"/>
</dbReference>
<dbReference type="GO" id="GO:0015934">
    <property type="term" value="C:large ribosomal subunit"/>
    <property type="evidence" value="ECO:0007669"/>
    <property type="project" value="InterPro"/>
</dbReference>
<dbReference type="GO" id="GO:0003735">
    <property type="term" value="F:structural constituent of ribosome"/>
    <property type="evidence" value="ECO:0007669"/>
    <property type="project" value="InterPro"/>
</dbReference>
<dbReference type="GO" id="GO:0006412">
    <property type="term" value="P:translation"/>
    <property type="evidence" value="ECO:0007669"/>
    <property type="project" value="UniProtKB-UniRule"/>
</dbReference>
<dbReference type="Gene3D" id="1.20.5.640">
    <property type="entry name" value="Single helix bin"/>
    <property type="match status" value="1"/>
</dbReference>
<dbReference type="HAMAP" id="MF_00340">
    <property type="entry name" value="Ribosomal_bL32"/>
    <property type="match status" value="1"/>
</dbReference>
<dbReference type="InterPro" id="IPR002677">
    <property type="entry name" value="Ribosomal_bL32"/>
</dbReference>
<dbReference type="InterPro" id="IPR044957">
    <property type="entry name" value="Ribosomal_bL32_bact"/>
</dbReference>
<dbReference type="InterPro" id="IPR011332">
    <property type="entry name" value="Ribosomal_zn-bd"/>
</dbReference>
<dbReference type="NCBIfam" id="TIGR01031">
    <property type="entry name" value="rpmF_bact"/>
    <property type="match status" value="1"/>
</dbReference>
<dbReference type="PANTHER" id="PTHR35534">
    <property type="entry name" value="50S RIBOSOMAL PROTEIN L32"/>
    <property type="match status" value="1"/>
</dbReference>
<dbReference type="PANTHER" id="PTHR35534:SF1">
    <property type="entry name" value="LARGE RIBOSOMAL SUBUNIT PROTEIN BL32"/>
    <property type="match status" value="1"/>
</dbReference>
<dbReference type="Pfam" id="PF01783">
    <property type="entry name" value="Ribosomal_L32p"/>
    <property type="match status" value="1"/>
</dbReference>
<dbReference type="SUPFAM" id="SSF57829">
    <property type="entry name" value="Zn-binding ribosomal proteins"/>
    <property type="match status" value="1"/>
</dbReference>
<comment type="similarity">
    <text evidence="1">Belongs to the bacterial ribosomal protein bL32 family.</text>
</comment>
<evidence type="ECO:0000255" key="1">
    <source>
        <dbReference type="HAMAP-Rule" id="MF_00340"/>
    </source>
</evidence>
<evidence type="ECO:0000256" key="2">
    <source>
        <dbReference type="SAM" id="MobiDB-lite"/>
    </source>
</evidence>
<evidence type="ECO:0000305" key="3"/>
<accession>P66205</accession>
<accession>Q8YJ14</accession>
<keyword id="KW-0687">Ribonucleoprotein</keyword>
<keyword id="KW-0689">Ribosomal protein</keyword>